<gene>
    <name evidence="1" type="primary">psbZ</name>
</gene>
<dbReference type="EMBL" id="AJ428413">
    <property type="protein sequence ID" value="CAD28718.1"/>
    <property type="molecule type" value="Genomic_DNA"/>
</dbReference>
<dbReference type="RefSeq" id="NP_862751.1">
    <property type="nucleotide sequence ID" value="NC_004993.1"/>
</dbReference>
<dbReference type="SMR" id="Q7YJX5"/>
<dbReference type="GeneID" id="2598095"/>
<dbReference type="GO" id="GO:0009535">
    <property type="term" value="C:chloroplast thylakoid membrane"/>
    <property type="evidence" value="ECO:0007669"/>
    <property type="project" value="UniProtKB-SubCell"/>
</dbReference>
<dbReference type="GO" id="GO:0009539">
    <property type="term" value="C:photosystem II reaction center"/>
    <property type="evidence" value="ECO:0007669"/>
    <property type="project" value="InterPro"/>
</dbReference>
<dbReference type="GO" id="GO:0015979">
    <property type="term" value="P:photosynthesis"/>
    <property type="evidence" value="ECO:0007669"/>
    <property type="project" value="UniProtKB-UniRule"/>
</dbReference>
<dbReference type="GO" id="GO:0042549">
    <property type="term" value="P:photosystem II stabilization"/>
    <property type="evidence" value="ECO:0007669"/>
    <property type="project" value="InterPro"/>
</dbReference>
<dbReference type="FunFam" id="1.10.287.740:FF:000001">
    <property type="entry name" value="Photosystem II reaction center protein Z"/>
    <property type="match status" value="1"/>
</dbReference>
<dbReference type="Gene3D" id="1.10.287.740">
    <property type="entry name" value="Photosystem II PsbZ, reaction centre"/>
    <property type="match status" value="1"/>
</dbReference>
<dbReference type="HAMAP" id="MF_00644">
    <property type="entry name" value="PSII_PsbZ"/>
    <property type="match status" value="1"/>
</dbReference>
<dbReference type="InterPro" id="IPR002644">
    <property type="entry name" value="PSII_PsbZ"/>
</dbReference>
<dbReference type="InterPro" id="IPR036512">
    <property type="entry name" value="PSII_PsbZ_sf"/>
</dbReference>
<dbReference type="NCBIfam" id="TIGR03043">
    <property type="entry name" value="PS_II_psbZ"/>
    <property type="match status" value="1"/>
</dbReference>
<dbReference type="PANTHER" id="PTHR34971">
    <property type="entry name" value="PHOTOSYSTEM II REACTION CENTER PROTEIN Z"/>
    <property type="match status" value="1"/>
</dbReference>
<dbReference type="PANTHER" id="PTHR34971:SF2">
    <property type="entry name" value="PHOTOSYSTEM II REACTION CENTER PROTEIN Z"/>
    <property type="match status" value="1"/>
</dbReference>
<dbReference type="Pfam" id="PF01737">
    <property type="entry name" value="Ycf9"/>
    <property type="match status" value="1"/>
</dbReference>
<dbReference type="SUPFAM" id="SSF161055">
    <property type="entry name" value="PsbZ-like"/>
    <property type="match status" value="1"/>
</dbReference>
<sequence>MIIAFQLAVFALIATSSILLISVPVVFASPDGWSNNKNVVFSGTSLWIGLVFLVAILNSLIS</sequence>
<protein>
    <recommendedName>
        <fullName evidence="1">Photosystem II reaction center protein Z</fullName>
        <shortName evidence="1">PSII-Z</shortName>
    </recommendedName>
</protein>
<organism>
    <name type="scientific">Calycanthus floridus var. glaucus</name>
    <name type="common">Eastern sweetshrub</name>
    <name type="synonym">Calycanthus fertilis var. ferax</name>
    <dbReference type="NCBI Taxonomy" id="212734"/>
    <lineage>
        <taxon>Eukaryota</taxon>
        <taxon>Viridiplantae</taxon>
        <taxon>Streptophyta</taxon>
        <taxon>Embryophyta</taxon>
        <taxon>Tracheophyta</taxon>
        <taxon>Spermatophyta</taxon>
        <taxon>Magnoliopsida</taxon>
        <taxon>Magnoliidae</taxon>
        <taxon>Laurales</taxon>
        <taxon>Calycanthaceae</taxon>
        <taxon>Calycanthus</taxon>
    </lineage>
</organism>
<proteinExistence type="inferred from homology"/>
<reference key="1">
    <citation type="journal article" date="2003" name="Plant Syst. Evol.">
        <title>The chloroplast genome of the 'basal' angiosperm Calycanthus fertilis -- structural and phylogenetic analyses.</title>
        <authorList>
            <person name="Goremykin V."/>
            <person name="Hirsch-Ernst K.I."/>
            <person name="Woelfl S."/>
            <person name="Hellwig F.H."/>
        </authorList>
    </citation>
    <scope>NUCLEOTIDE SEQUENCE [LARGE SCALE GENOMIC DNA]</scope>
</reference>
<geneLocation type="chloroplast"/>
<evidence type="ECO:0000255" key="1">
    <source>
        <dbReference type="HAMAP-Rule" id="MF_00644"/>
    </source>
</evidence>
<feature type="chain" id="PRO_0000217691" description="Photosystem II reaction center protein Z">
    <location>
        <begin position="1"/>
        <end position="62"/>
    </location>
</feature>
<feature type="transmembrane region" description="Helical" evidence="1">
    <location>
        <begin position="8"/>
        <end position="28"/>
    </location>
</feature>
<feature type="transmembrane region" description="Helical" evidence="1">
    <location>
        <begin position="41"/>
        <end position="61"/>
    </location>
</feature>
<keyword id="KW-0150">Chloroplast</keyword>
<keyword id="KW-0472">Membrane</keyword>
<keyword id="KW-0602">Photosynthesis</keyword>
<keyword id="KW-0604">Photosystem II</keyword>
<keyword id="KW-0934">Plastid</keyword>
<keyword id="KW-0674">Reaction center</keyword>
<keyword id="KW-0793">Thylakoid</keyword>
<keyword id="KW-0812">Transmembrane</keyword>
<keyword id="KW-1133">Transmembrane helix</keyword>
<accession>Q7YJX5</accession>
<comment type="function">
    <text evidence="1">May control the interaction of photosystem II (PSII) cores with the light-harvesting antenna, regulates electron flow through the 2 photosystem reaction centers. PSII is a light-driven water plastoquinone oxidoreductase, using light energy to abstract electrons from H(2)O, generating a proton gradient subsequently used for ATP formation.</text>
</comment>
<comment type="subunit">
    <text evidence="1">PSII is composed of 1 copy each of membrane proteins PsbA, PsbB, PsbC, PsbD, PsbE, PsbF, PsbH, PsbI, PsbJ, PsbK, PsbL, PsbM, PsbT, PsbY, PsbZ, Psb30/Ycf12, at least 3 peripheral proteins of the oxygen-evolving complex and a large number of cofactors. It forms dimeric complexes.</text>
</comment>
<comment type="subcellular location">
    <subcellularLocation>
        <location evidence="1">Plastid</location>
        <location evidence="1">Chloroplast thylakoid membrane</location>
        <topology evidence="1">Multi-pass membrane protein</topology>
    </subcellularLocation>
</comment>
<comment type="similarity">
    <text evidence="1">Belongs to the PsbZ family.</text>
</comment>
<name>PSBZ_CALFG</name>